<gene>
    <name type="primary">Gnl1</name>
</gene>
<proteinExistence type="evidence at protein level"/>
<keyword id="KW-0342">GTP-binding</keyword>
<keyword id="KW-0547">Nucleotide-binding</keyword>
<keyword id="KW-0597">Phosphoprotein</keyword>
<keyword id="KW-1185">Reference proteome</keyword>
<dbReference type="EMBL" id="BX883048">
    <property type="protein sequence ID" value="CAE84041.1"/>
    <property type="molecule type" value="Genomic_DNA"/>
</dbReference>
<dbReference type="EMBL" id="BC129081">
    <property type="protein sequence ID" value="AAI29082.1"/>
    <property type="molecule type" value="mRNA"/>
</dbReference>
<dbReference type="RefSeq" id="NP_997665.1">
    <property type="nucleotide sequence ID" value="NM_212500.3"/>
</dbReference>
<dbReference type="FunCoup" id="Q6MG06">
    <property type="interactions" value="3060"/>
</dbReference>
<dbReference type="IntAct" id="Q6MG06">
    <property type="interactions" value="1"/>
</dbReference>
<dbReference type="STRING" id="10116.ENSRNOP00000045697"/>
<dbReference type="iPTMnet" id="Q6MG06"/>
<dbReference type="PhosphoSitePlus" id="Q6MG06"/>
<dbReference type="jPOST" id="Q6MG06"/>
<dbReference type="PaxDb" id="10116-ENSRNOP00000045697"/>
<dbReference type="GeneID" id="309593"/>
<dbReference type="KEGG" id="rno:309593"/>
<dbReference type="UCSC" id="RGD:1303051">
    <property type="organism name" value="rat"/>
</dbReference>
<dbReference type="AGR" id="RGD:1303051"/>
<dbReference type="CTD" id="2794"/>
<dbReference type="RGD" id="1303051">
    <property type="gene designation" value="Gnl1"/>
</dbReference>
<dbReference type="VEuPathDB" id="HostDB:ENSRNOG00000000798"/>
<dbReference type="eggNOG" id="KOG1424">
    <property type="taxonomic scope" value="Eukaryota"/>
</dbReference>
<dbReference type="InParanoid" id="Q6MG06"/>
<dbReference type="OrthoDB" id="67838at9989"/>
<dbReference type="PhylomeDB" id="Q6MG06"/>
<dbReference type="TreeFam" id="TF324569"/>
<dbReference type="PRO" id="PR:Q6MG06"/>
<dbReference type="Proteomes" id="UP000002494">
    <property type="component" value="Chromosome 20"/>
</dbReference>
<dbReference type="Bgee" id="ENSRNOG00000000798">
    <property type="expression patterns" value="Expressed in frontal cortex and 19 other cell types or tissues"/>
</dbReference>
<dbReference type="ExpressionAtlas" id="Q6MG06">
    <property type="expression patterns" value="baseline and differential"/>
</dbReference>
<dbReference type="GO" id="GO:0005525">
    <property type="term" value="F:GTP binding"/>
    <property type="evidence" value="ECO:0007669"/>
    <property type="project" value="UniProtKB-KW"/>
</dbReference>
<dbReference type="GO" id="GO:0003924">
    <property type="term" value="F:GTPase activity"/>
    <property type="evidence" value="ECO:0000318"/>
    <property type="project" value="GO_Central"/>
</dbReference>
<dbReference type="GO" id="GO:0006974">
    <property type="term" value="P:DNA damage response"/>
    <property type="evidence" value="ECO:0000266"/>
    <property type="project" value="RGD"/>
</dbReference>
<dbReference type="CDD" id="cd01857">
    <property type="entry name" value="HSR1_MMR1"/>
    <property type="match status" value="1"/>
</dbReference>
<dbReference type="Gene3D" id="3.40.50.300">
    <property type="entry name" value="P-loop containing nucleotide triphosphate hydrolases"/>
    <property type="match status" value="1"/>
</dbReference>
<dbReference type="InterPro" id="IPR030378">
    <property type="entry name" value="G_CP_dom"/>
</dbReference>
<dbReference type="InterPro" id="IPR043358">
    <property type="entry name" value="GNL1-like"/>
</dbReference>
<dbReference type="InterPro" id="IPR006073">
    <property type="entry name" value="GTP-bd"/>
</dbReference>
<dbReference type="InterPro" id="IPR027417">
    <property type="entry name" value="P-loop_NTPase"/>
</dbReference>
<dbReference type="PANTHER" id="PTHR45709:SF3">
    <property type="entry name" value="GUANINE NUCLEOTIDE-BINDING PROTEIN-LIKE 1"/>
    <property type="match status" value="1"/>
</dbReference>
<dbReference type="PANTHER" id="PTHR45709">
    <property type="entry name" value="LARGE SUBUNIT GTPASE 1 HOMOLOG-RELATED"/>
    <property type="match status" value="1"/>
</dbReference>
<dbReference type="Pfam" id="PF01926">
    <property type="entry name" value="MMR_HSR1"/>
    <property type="match status" value="1"/>
</dbReference>
<dbReference type="SUPFAM" id="SSF52540">
    <property type="entry name" value="P-loop containing nucleoside triphosphate hydrolases"/>
    <property type="match status" value="1"/>
</dbReference>
<dbReference type="PROSITE" id="PS51721">
    <property type="entry name" value="G_CP"/>
    <property type="match status" value="1"/>
</dbReference>
<organism>
    <name type="scientific">Rattus norvegicus</name>
    <name type="common">Rat</name>
    <dbReference type="NCBI Taxonomy" id="10116"/>
    <lineage>
        <taxon>Eukaryota</taxon>
        <taxon>Metazoa</taxon>
        <taxon>Chordata</taxon>
        <taxon>Craniata</taxon>
        <taxon>Vertebrata</taxon>
        <taxon>Euteleostomi</taxon>
        <taxon>Mammalia</taxon>
        <taxon>Eutheria</taxon>
        <taxon>Euarchontoglires</taxon>
        <taxon>Glires</taxon>
        <taxon>Rodentia</taxon>
        <taxon>Myomorpha</taxon>
        <taxon>Muroidea</taxon>
        <taxon>Muridae</taxon>
        <taxon>Murinae</taxon>
        <taxon>Rattus</taxon>
    </lineage>
</organism>
<name>GNL1_RAT</name>
<feature type="chain" id="PRO_0000295691" description="Guanine nucleotide-binding protein-like 1">
    <location>
        <begin position="1"/>
        <end position="607"/>
    </location>
</feature>
<feature type="domain" description="CP-type G" evidence="4">
    <location>
        <begin position="178"/>
        <end position="418"/>
    </location>
</feature>
<feature type="region of interest" description="Disordered" evidence="5">
    <location>
        <begin position="1"/>
        <end position="81"/>
    </location>
</feature>
<feature type="region of interest" description="Disordered" evidence="5">
    <location>
        <begin position="544"/>
        <end position="607"/>
    </location>
</feature>
<feature type="compositionally biased region" description="Basic residues" evidence="5">
    <location>
        <begin position="1"/>
        <end position="14"/>
    </location>
</feature>
<feature type="compositionally biased region" description="Basic and acidic residues" evidence="5">
    <location>
        <begin position="15"/>
        <end position="26"/>
    </location>
</feature>
<feature type="compositionally biased region" description="Acidic residues" evidence="5">
    <location>
        <begin position="550"/>
        <end position="585"/>
    </location>
</feature>
<feature type="binding site" evidence="3">
    <location>
        <begin position="225"/>
        <end position="228"/>
    </location>
    <ligand>
        <name>GTP</name>
        <dbReference type="ChEBI" id="CHEBI:37565"/>
    </ligand>
</feature>
<feature type="binding site" evidence="3">
    <location>
        <begin position="367"/>
        <end position="374"/>
    </location>
    <ligand>
        <name>GTP</name>
        <dbReference type="ChEBI" id="CHEBI:37565"/>
    </ligand>
</feature>
<feature type="binding site" evidence="3">
    <location>
        <begin position="411"/>
        <end position="415"/>
    </location>
    <ligand>
        <name>GTP</name>
        <dbReference type="ChEBI" id="CHEBI:37565"/>
    </ligand>
</feature>
<feature type="modified residue" description="Phosphoserine" evidence="2">
    <location>
        <position position="32"/>
    </location>
</feature>
<feature type="modified residue" description="Phosphoserine" evidence="2">
    <location>
        <position position="33"/>
    </location>
</feature>
<feature type="modified residue" description="Phosphoserine" evidence="2">
    <location>
        <position position="34"/>
    </location>
</feature>
<feature type="modified residue" description="Phosphothreonine" evidence="6">
    <location>
        <position position="48"/>
    </location>
</feature>
<feature type="modified residue" description="Phosphothreonine" evidence="6">
    <location>
        <position position="50"/>
    </location>
</feature>
<feature type="modified residue" description="Phosphoserine" evidence="6">
    <location>
        <position position="51"/>
    </location>
</feature>
<feature type="modified residue" description="Phosphoserine" evidence="2">
    <location>
        <position position="68"/>
    </location>
</feature>
<feature type="modified residue" description="Phosphoserine" evidence="6">
    <location>
        <position position="324"/>
    </location>
</feature>
<feature type="modified residue" description="Phosphoserine" evidence="2">
    <location>
        <position position="561"/>
    </location>
</feature>
<feature type="modified residue" description="Phosphoserine" evidence="2">
    <location>
        <position position="562"/>
    </location>
</feature>
<feature type="modified residue" description="Phosphoserine" evidence="2">
    <location>
        <position position="563"/>
    </location>
</feature>
<reference key="1">
    <citation type="journal article" date="2004" name="Genome Res.">
        <title>The genomic sequence and comparative analysis of the rat major histocompatibility complex.</title>
        <authorList>
            <person name="Hurt P."/>
            <person name="Walter L."/>
            <person name="Sudbrak R."/>
            <person name="Klages S."/>
            <person name="Mueller I."/>
            <person name="Shiina T."/>
            <person name="Inoko H."/>
            <person name="Lehrach H."/>
            <person name="Guenther E."/>
            <person name="Reinhardt R."/>
            <person name="Himmelbauer H."/>
        </authorList>
    </citation>
    <scope>NUCLEOTIDE SEQUENCE [LARGE SCALE GENOMIC DNA]</scope>
    <source>
        <strain>Brown Norway</strain>
    </source>
</reference>
<reference key="2">
    <citation type="journal article" date="2004" name="Genome Res.">
        <title>The status, quality, and expansion of the NIH full-length cDNA project: the Mammalian Gene Collection (MGC).</title>
        <authorList>
            <consortium name="The MGC Project Team"/>
        </authorList>
    </citation>
    <scope>NUCLEOTIDE SEQUENCE [LARGE SCALE MRNA]</scope>
    <source>
        <tissue>Placenta</tissue>
    </source>
</reference>
<reference key="3">
    <citation type="journal article" date="2012" name="Nat. Commun.">
        <title>Quantitative maps of protein phosphorylation sites across 14 different rat organs and tissues.</title>
        <authorList>
            <person name="Lundby A."/>
            <person name="Secher A."/>
            <person name="Lage K."/>
            <person name="Nordsborg N.B."/>
            <person name="Dmytriyev A."/>
            <person name="Lundby C."/>
            <person name="Olsen J.V."/>
        </authorList>
    </citation>
    <scope>PHOSPHORYLATION [LARGE SCALE ANALYSIS] AT THR-48; THR-50; SER-51 AND SER-324</scope>
    <scope>IDENTIFICATION BY MASS SPECTROMETRY [LARGE SCALE ANALYSIS]</scope>
</reference>
<protein>
    <recommendedName>
        <fullName>Guanine nucleotide-binding protein-like 1</fullName>
    </recommendedName>
</protein>
<sequence length="607" mass="68707">MPRKKPFSVKQKKKQLQDKRERKRGLQDGLRSSSNSRSGSRERREEQTDTSDGESVTHHIRRLNQQPSQGLGPRGYDPNRYRLHFERDSREEVERRKRAAREQVLQPVSAEMLELDIQEVYQPGSVLDFPRRPPWSYEMSKEQLMSQEERSFQEYLGKIHGAYTSEKLSYFEHNLETWRQLWRVLEMSDIVLLITDIRHPVVNFPPALYEYVTGELGLALVLVLNKVDLAPPALVVAWKHYFHQHYPQLHIVLFTSFPRDTRTPQEPGSVLKKSRRRGRGWTRALGPEQLLRACEAITVGKVDLSSWREKIARDVAGASWGNVSGEEEEEEDGPAVLVEQQTDSAMEPTGPSRERYKDGVVTIGCVGFPNVGKSSLINGLVGRKVVSVSRTPGHTRYFQTYFLTPSVKLCDCPGLIFPSLLPRQLQVLAGIYPIAQIQEPYTSVGYLACRIPVQALLHLRHPEAEDPSAEHPWCAWDVCEAWAEKRGYKTAKAARNDVYRAANSLLRLAVDGRLSLCFHPPGYSEQRGTWESHAETAELVLSQGRVGPAGDEEEEEEEELSSSCEEEGEEDRDADEEGEGDEDTPTSDTGSCLAARNPYALLGEGEC</sequence>
<accession>Q6MG06</accession>
<comment type="function">
    <text evidence="1">Possible regulatory or functional link with the histocompatibility cluster.</text>
</comment>
<comment type="domain">
    <text>In contrast to other GTP-binding proteins, this family is characterized by a circular permutation of the GTPase motifs described by a G4-G1-G3 pattern.</text>
</comment>
<comment type="similarity">
    <text evidence="4">Belongs to the TRAFAC class YlqF/YawG GTPase family.</text>
</comment>
<evidence type="ECO:0000250" key="1"/>
<evidence type="ECO:0000250" key="2">
    <source>
        <dbReference type="UniProtKB" id="P36915"/>
    </source>
</evidence>
<evidence type="ECO:0000255" key="3"/>
<evidence type="ECO:0000255" key="4">
    <source>
        <dbReference type="PROSITE-ProRule" id="PRU01058"/>
    </source>
</evidence>
<evidence type="ECO:0000256" key="5">
    <source>
        <dbReference type="SAM" id="MobiDB-lite"/>
    </source>
</evidence>
<evidence type="ECO:0007744" key="6">
    <source>
    </source>
</evidence>